<accession>Q65RB2</accession>
<organism>
    <name type="scientific">Mannheimia succiniciproducens (strain KCTC 0769BP / MBEL55E)</name>
    <dbReference type="NCBI Taxonomy" id="221988"/>
    <lineage>
        <taxon>Bacteria</taxon>
        <taxon>Pseudomonadati</taxon>
        <taxon>Pseudomonadota</taxon>
        <taxon>Gammaproteobacteria</taxon>
        <taxon>Pasteurellales</taxon>
        <taxon>Pasteurellaceae</taxon>
        <taxon>Basfia</taxon>
    </lineage>
</organism>
<sequence>MSISQLSRKNVQALTPYQSARRLGGNGDVWLNANEYPTSPDFNLSERIFNRYPEPQPEAVIKGYAAYADVKPENVIVTRGGDESIELLIKGFCEPEDKVLYCPPTYGMYAVSAETLGIATKTVPLTEDFQLDLPEIEKNLAGVKVIFVCSPNNPTGNVLNQADLIRLLDITAGSAIVVVDEAYIEFSPETSMIKQLGNYPHLAIIRTLSKAFALAGLRCGFTLANPELIGVLQKVIAPYPLPVPVSDIAAQALQPQGVAQMKMRVADVLANRAWLIGELKQIPSVVKIFATEANYVLVKFQDGEKVFNALWEKGIILRDQHKAFGLKNCIRISIGTRAELEKTVVALKLA</sequence>
<dbReference type="EC" id="2.6.1.9" evidence="1"/>
<dbReference type="EMBL" id="AE016827">
    <property type="protein sequence ID" value="AAU38498.1"/>
    <property type="molecule type" value="Genomic_DNA"/>
</dbReference>
<dbReference type="RefSeq" id="WP_011201051.1">
    <property type="nucleotide sequence ID" value="NC_006300.1"/>
</dbReference>
<dbReference type="SMR" id="Q65RB2"/>
<dbReference type="STRING" id="221988.MS1891"/>
<dbReference type="KEGG" id="msu:MS1891"/>
<dbReference type="eggNOG" id="COG0079">
    <property type="taxonomic scope" value="Bacteria"/>
</dbReference>
<dbReference type="HOGENOM" id="CLU_017584_3_1_6"/>
<dbReference type="OrthoDB" id="9813612at2"/>
<dbReference type="UniPathway" id="UPA00031">
    <property type="reaction ID" value="UER00012"/>
</dbReference>
<dbReference type="Proteomes" id="UP000000607">
    <property type="component" value="Chromosome"/>
</dbReference>
<dbReference type="GO" id="GO:0004400">
    <property type="term" value="F:histidinol-phosphate transaminase activity"/>
    <property type="evidence" value="ECO:0007669"/>
    <property type="project" value="UniProtKB-UniRule"/>
</dbReference>
<dbReference type="GO" id="GO:0030170">
    <property type="term" value="F:pyridoxal phosphate binding"/>
    <property type="evidence" value="ECO:0007669"/>
    <property type="project" value="InterPro"/>
</dbReference>
<dbReference type="GO" id="GO:0000105">
    <property type="term" value="P:L-histidine biosynthetic process"/>
    <property type="evidence" value="ECO:0007669"/>
    <property type="project" value="UniProtKB-UniRule"/>
</dbReference>
<dbReference type="CDD" id="cd00609">
    <property type="entry name" value="AAT_like"/>
    <property type="match status" value="1"/>
</dbReference>
<dbReference type="Gene3D" id="3.90.1150.10">
    <property type="entry name" value="Aspartate Aminotransferase, domain 1"/>
    <property type="match status" value="1"/>
</dbReference>
<dbReference type="Gene3D" id="3.40.640.10">
    <property type="entry name" value="Type I PLP-dependent aspartate aminotransferase-like (Major domain)"/>
    <property type="match status" value="1"/>
</dbReference>
<dbReference type="HAMAP" id="MF_01023">
    <property type="entry name" value="HisC_aminotrans_2"/>
    <property type="match status" value="1"/>
</dbReference>
<dbReference type="InterPro" id="IPR001917">
    <property type="entry name" value="Aminotrans_II_pyridoxalP_BS"/>
</dbReference>
<dbReference type="InterPro" id="IPR004839">
    <property type="entry name" value="Aminotransferase_I/II_large"/>
</dbReference>
<dbReference type="InterPro" id="IPR005861">
    <property type="entry name" value="HisP_aminotrans"/>
</dbReference>
<dbReference type="InterPro" id="IPR015424">
    <property type="entry name" value="PyrdxlP-dep_Trfase"/>
</dbReference>
<dbReference type="InterPro" id="IPR015421">
    <property type="entry name" value="PyrdxlP-dep_Trfase_major"/>
</dbReference>
<dbReference type="InterPro" id="IPR015422">
    <property type="entry name" value="PyrdxlP-dep_Trfase_small"/>
</dbReference>
<dbReference type="NCBIfam" id="TIGR01141">
    <property type="entry name" value="hisC"/>
    <property type="match status" value="1"/>
</dbReference>
<dbReference type="PANTHER" id="PTHR42885:SF2">
    <property type="entry name" value="HISTIDINOL-PHOSPHATE AMINOTRANSFERASE"/>
    <property type="match status" value="1"/>
</dbReference>
<dbReference type="PANTHER" id="PTHR42885">
    <property type="entry name" value="HISTIDINOL-PHOSPHATE AMINOTRANSFERASE-RELATED"/>
    <property type="match status" value="1"/>
</dbReference>
<dbReference type="Pfam" id="PF00155">
    <property type="entry name" value="Aminotran_1_2"/>
    <property type="match status" value="1"/>
</dbReference>
<dbReference type="SUPFAM" id="SSF53383">
    <property type="entry name" value="PLP-dependent transferases"/>
    <property type="match status" value="1"/>
</dbReference>
<dbReference type="PROSITE" id="PS00599">
    <property type="entry name" value="AA_TRANSFER_CLASS_2"/>
    <property type="match status" value="1"/>
</dbReference>
<feature type="chain" id="PRO_0000153389" description="Histidinol-phosphate aminotransferase 2">
    <location>
        <begin position="1"/>
        <end position="350"/>
    </location>
</feature>
<feature type="modified residue" description="N6-(pyridoxal phosphate)lysine" evidence="1">
    <location>
        <position position="210"/>
    </location>
</feature>
<evidence type="ECO:0000255" key="1">
    <source>
        <dbReference type="HAMAP-Rule" id="MF_01023"/>
    </source>
</evidence>
<name>HIS82_MANSM</name>
<proteinExistence type="inferred from homology"/>
<gene>
    <name evidence="1" type="primary">hisC2</name>
    <name type="ordered locus">MS1891</name>
</gene>
<keyword id="KW-0028">Amino-acid biosynthesis</keyword>
<keyword id="KW-0032">Aminotransferase</keyword>
<keyword id="KW-0368">Histidine biosynthesis</keyword>
<keyword id="KW-0663">Pyridoxal phosphate</keyword>
<keyword id="KW-0808">Transferase</keyword>
<comment type="catalytic activity">
    <reaction evidence="1">
        <text>L-histidinol phosphate + 2-oxoglutarate = 3-(imidazol-4-yl)-2-oxopropyl phosphate + L-glutamate</text>
        <dbReference type="Rhea" id="RHEA:23744"/>
        <dbReference type="ChEBI" id="CHEBI:16810"/>
        <dbReference type="ChEBI" id="CHEBI:29985"/>
        <dbReference type="ChEBI" id="CHEBI:57766"/>
        <dbReference type="ChEBI" id="CHEBI:57980"/>
        <dbReference type="EC" id="2.6.1.9"/>
    </reaction>
</comment>
<comment type="cofactor">
    <cofactor evidence="1">
        <name>pyridoxal 5'-phosphate</name>
        <dbReference type="ChEBI" id="CHEBI:597326"/>
    </cofactor>
</comment>
<comment type="pathway">
    <text evidence="1">Amino-acid biosynthesis; L-histidine biosynthesis; L-histidine from 5-phospho-alpha-D-ribose 1-diphosphate: step 7/9.</text>
</comment>
<comment type="subunit">
    <text evidence="1">Homodimer.</text>
</comment>
<comment type="similarity">
    <text evidence="1">Belongs to the class-II pyridoxal-phosphate-dependent aminotransferase family. Histidinol-phosphate aminotransferase subfamily.</text>
</comment>
<protein>
    <recommendedName>
        <fullName evidence="1">Histidinol-phosphate aminotransferase 2</fullName>
        <ecNumber evidence="1">2.6.1.9</ecNumber>
    </recommendedName>
    <alternativeName>
        <fullName evidence="1">Imidazole acetol-phosphate transaminase 2</fullName>
    </alternativeName>
</protein>
<reference key="1">
    <citation type="journal article" date="2004" name="Nat. Biotechnol.">
        <title>The genome sequence of the capnophilic rumen bacterium Mannheimia succiniciproducens.</title>
        <authorList>
            <person name="Hong S.H."/>
            <person name="Kim J.S."/>
            <person name="Lee S.Y."/>
            <person name="In Y.H."/>
            <person name="Choi S.S."/>
            <person name="Rih J.-K."/>
            <person name="Kim C.H."/>
            <person name="Jeong H."/>
            <person name="Hur C.G."/>
            <person name="Kim J.J."/>
        </authorList>
    </citation>
    <scope>NUCLEOTIDE SEQUENCE [LARGE SCALE GENOMIC DNA]</scope>
    <source>
        <strain>KCTC 0769BP / MBEL55E</strain>
    </source>
</reference>